<evidence type="ECO:0000250" key="1">
    <source>
        <dbReference type="UniProtKB" id="Q19187"/>
    </source>
</evidence>
<evidence type="ECO:0000255" key="2"/>
<evidence type="ECO:0000255" key="3">
    <source>
        <dbReference type="PROSITE-ProRule" id="PRU00099"/>
    </source>
</evidence>
<evidence type="ECO:0000255" key="4">
    <source>
        <dbReference type="PROSITE-ProRule" id="PRU00159"/>
    </source>
</evidence>
<evidence type="ECO:0000255" key="5">
    <source>
        <dbReference type="PROSITE-ProRule" id="PRU00498"/>
    </source>
</evidence>
<evidence type="ECO:0000256" key="6">
    <source>
        <dbReference type="SAM" id="MobiDB-lite"/>
    </source>
</evidence>
<evidence type="ECO:0000269" key="7">
    <source>
    </source>
</evidence>
<evidence type="ECO:0000305" key="8"/>
<evidence type="ECO:0000312" key="9">
    <source>
        <dbReference type="Proteomes" id="UP000001940"/>
    </source>
</evidence>
<evidence type="ECO:0000312" key="10">
    <source>
        <dbReference type="WormBase" id="C17F4.6"/>
    </source>
</evidence>
<protein>
    <recommendedName>
        <fullName evidence="8">Receptor-type guanylate cyclase gcy-19</fullName>
        <ecNumber evidence="1">4.6.1.2</ecNumber>
    </recommendedName>
</protein>
<accession>O16544</accession>
<keyword id="KW-1003">Cell membrane</keyword>
<keyword id="KW-0141">cGMP biosynthesis</keyword>
<keyword id="KW-0325">Glycoprotein</keyword>
<keyword id="KW-0342">GTP-binding</keyword>
<keyword id="KW-0456">Lyase</keyword>
<keyword id="KW-0472">Membrane</keyword>
<keyword id="KW-0547">Nucleotide-binding</keyword>
<keyword id="KW-0675">Receptor</keyword>
<keyword id="KW-1185">Reference proteome</keyword>
<keyword id="KW-0732">Signal</keyword>
<keyword id="KW-0812">Transmembrane</keyword>
<keyword id="KW-1133">Transmembrane helix</keyword>
<sequence length="1182" mass="132247">MEYLLFLLLFAGFLTFLPRFLIYAQITSSTTTTTPVPAANRRTIRVGVAAVQTTELDSIGWPMSGGAINMAIQKLRDDGFIAPFDFEVTVNYTECDRSLGAAVGMEFMRTKRLDVVIGPPCRDPMEIMATMATYYSTPMLGWGLVTDSKFTDTERYPYLTNIMANSLSLGFSLVKLLEMMEWDRVALVYEESAQDYPLSVINDVETAINEYDTFAVNVVVKQALPGGDLNDAQYISVLNRIKLRCRIIVSVFQTAPTRRRYLKMIDQQGMANEEYVHILLGLRSIGFGKQSAGLTKCELNCLSSGLAPFWDIAPDDGLNDRLKQAATRMLVMDLSTDVPDINYLNTFTMNCGAVVVNPPVSCATPACINASTSPPSAFARSLHDVFYLYGLAITNLYNQDPAYLNDIDKINGALQLNFAGLTGEVSINANNSRVPKLMLYALNDKYDQASFMNLTYSLNGGAVSVSLAYTNEASLWYWYGGKRPLSVPVCGFAGTDCPQSFVDQYGALVFAIGGVLIFAMLFVITCFFYVMRQKRLERDRIDAEWQIPLVKLQAPPKRDKERMSKRSLQSGPSNITDTSKMTFDNTFSNYSIFYLDKEPVLSTAHPASNLIRTDYDTFVRLRKLDHENVNKFVGMSIDGPEYLAVWKLCMRGSLQDIIGQGNFSIDPFFMFCVIRDMAEGLKYLHNSFLHVHANLRSGTVLVNESWQAKLTDFGLGTLAEEKKPMKRRQLWMAPEVIRGTLLPHQIEKSADIYSLAVIASEVLTRKEAWNMAERKDTVDEIVYRIKKGGPNAPRPELDMDGVEINHNLLILIRDCWSEEPADRPSADVICNLLKNMMPKKGNLMDHVFNILEDYTTNLEVEVEDRTKELTAEKKKADVLLGRMLPKQVAERLKQGQTVEPEGFDSVTVFFSDVVKFTQLAAKCSPFQVVNLLNDLYSNFDAIIEEHGCYKVESIGDGYLCVSGLPSKNGNAHIKQIVELSLDFMSYCKSFKIPHLPREKVELRIGVNSGPCVAGVVGLSMPRYCLFGDTVNTASRMESNGKASHIHLSAASYTLLMKHYPNQYNTASRGDVIIKGKGVMETFWVFERNNQFMGVSSNSGYQSDKKATNNGSSPESTPPSTPPMHEVKANSPVRHRKPPSPSSPTLSKRSVSPIMEAKARDIHNEETEALYRQFRRQETLALI</sequence>
<reference evidence="9" key="1">
    <citation type="journal article" date="1998" name="Science">
        <title>Genome sequence of the nematode C. elegans: a platform for investigating biology.</title>
        <authorList>
            <consortium name="The C. elegans sequencing consortium"/>
        </authorList>
    </citation>
    <scope>NUCLEOTIDE SEQUENCE [LARGE SCALE GENOMIC DNA]</scope>
    <source>
        <strain evidence="9">Bristol N2</strain>
    </source>
</reference>
<reference evidence="8" key="2">
    <citation type="journal article" date="2006" name="Genetics">
        <title>Searching for neuronal left/right asymmetry: genomewide analysis of nematode receptor-type guanylyl cyclases.</title>
        <authorList>
            <person name="Ortiz C.O."/>
            <person name="Etchberger J.F."/>
            <person name="Posy S.L."/>
            <person name="Frokjaer-Jensen C."/>
            <person name="Lockery S."/>
            <person name="Honig B."/>
            <person name="Hobert O."/>
        </authorList>
    </citation>
    <scope>TISSUE SPECIFICITY</scope>
</reference>
<gene>
    <name evidence="10" type="primary">gcy-19</name>
    <name evidence="10" type="ORF">C17F4.6</name>
</gene>
<name>GCY19_CAEEL</name>
<comment type="function">
    <text evidence="1">Guanylate cyclase involved in the production of the second messenger cGMP (By similarity).</text>
</comment>
<comment type="catalytic activity">
    <reaction evidence="1">
        <text>GTP = 3',5'-cyclic GMP + diphosphate</text>
        <dbReference type="Rhea" id="RHEA:13665"/>
        <dbReference type="ChEBI" id="CHEBI:33019"/>
        <dbReference type="ChEBI" id="CHEBI:37565"/>
        <dbReference type="ChEBI" id="CHEBI:57746"/>
        <dbReference type="EC" id="4.6.1.2"/>
    </reaction>
</comment>
<comment type="subcellular location">
    <subcellularLocation>
        <location evidence="8">Cell membrane</location>
        <topology evidence="8">Single-pass type I membrane protein</topology>
    </subcellularLocation>
</comment>
<comment type="tissue specificity">
    <text evidence="7">Expressed in IL2 sensory neurons.</text>
</comment>
<comment type="domain">
    <text evidence="4">The protein kinase domain is predicted to be catalytically inactive.</text>
</comment>
<comment type="similarity">
    <text evidence="3">Belongs to the adenylyl cyclase class-4/guanylyl cyclase family.</text>
</comment>
<feature type="signal peptide" evidence="2">
    <location>
        <begin position="1"/>
        <end position="24"/>
    </location>
</feature>
<feature type="chain" id="PRO_0000433288" description="Receptor-type guanylate cyclase gcy-19" evidence="2">
    <location>
        <begin position="25"/>
        <end position="1182"/>
    </location>
</feature>
<feature type="topological domain" description="Extracellular" evidence="2">
    <location>
        <begin position="25"/>
        <end position="507"/>
    </location>
</feature>
<feature type="transmembrane region" description="Helical" evidence="2">
    <location>
        <begin position="508"/>
        <end position="528"/>
    </location>
</feature>
<feature type="topological domain" description="Cytoplasmic" evidence="2">
    <location>
        <begin position="529"/>
        <end position="1182"/>
    </location>
</feature>
<feature type="domain" description="Protein kinase" evidence="4">
    <location>
        <begin position="562"/>
        <end position="849"/>
    </location>
</feature>
<feature type="domain" description="Guanylate cyclase" evidence="3">
    <location>
        <begin position="907"/>
        <end position="1037"/>
    </location>
</feature>
<feature type="region of interest" description="Disordered" evidence="6">
    <location>
        <begin position="1094"/>
        <end position="1164"/>
    </location>
</feature>
<feature type="compositionally biased region" description="Low complexity" evidence="6">
    <location>
        <begin position="1142"/>
        <end position="1152"/>
    </location>
</feature>
<feature type="glycosylation site" description="N-linked (GlcNAc...) asparagine" evidence="5">
    <location>
        <position position="91"/>
    </location>
</feature>
<feature type="glycosylation site" description="N-linked (GlcNAc...) asparagine" evidence="5">
    <location>
        <position position="369"/>
    </location>
</feature>
<feature type="glycosylation site" description="N-linked (GlcNAc...) asparagine" evidence="5">
    <location>
        <position position="430"/>
    </location>
</feature>
<feature type="glycosylation site" description="N-linked (GlcNAc...) asparagine" evidence="5">
    <location>
        <position position="453"/>
    </location>
</feature>
<organism evidence="9">
    <name type="scientific">Caenorhabditis elegans</name>
    <dbReference type="NCBI Taxonomy" id="6239"/>
    <lineage>
        <taxon>Eukaryota</taxon>
        <taxon>Metazoa</taxon>
        <taxon>Ecdysozoa</taxon>
        <taxon>Nematoda</taxon>
        <taxon>Chromadorea</taxon>
        <taxon>Rhabditida</taxon>
        <taxon>Rhabditina</taxon>
        <taxon>Rhabditomorpha</taxon>
        <taxon>Rhabditoidea</taxon>
        <taxon>Rhabditidae</taxon>
        <taxon>Peloderinae</taxon>
        <taxon>Caenorhabditis</taxon>
    </lineage>
</organism>
<proteinExistence type="evidence at transcript level"/>
<dbReference type="EC" id="4.6.1.2" evidence="1"/>
<dbReference type="EMBL" id="BX284602">
    <property type="protein sequence ID" value="CCD64916.1"/>
    <property type="molecule type" value="Genomic_DNA"/>
</dbReference>
<dbReference type="RefSeq" id="NP_494491.4">
    <property type="nucleotide sequence ID" value="NM_062090.6"/>
</dbReference>
<dbReference type="SMR" id="O16544"/>
<dbReference type="FunCoup" id="O16544">
    <property type="interactions" value="95"/>
</dbReference>
<dbReference type="STRING" id="6239.C17F4.6c.1"/>
<dbReference type="GlyCosmos" id="O16544">
    <property type="glycosylation" value="4 sites, No reported glycans"/>
</dbReference>
<dbReference type="PaxDb" id="6239-C17F4.6"/>
<dbReference type="UCSC" id="C17F4.6">
    <property type="organism name" value="c. elegans"/>
</dbReference>
<dbReference type="WormBase" id="C17F4.6">
    <property type="protein sequence ID" value="CE45028"/>
    <property type="gene ID" value="WBGene00001544"/>
    <property type="gene designation" value="gcy-19"/>
</dbReference>
<dbReference type="eggNOG" id="KOG1023">
    <property type="taxonomic scope" value="Eukaryota"/>
</dbReference>
<dbReference type="HOGENOM" id="CLU_001072_1_3_1"/>
<dbReference type="InParanoid" id="O16544"/>
<dbReference type="OMA" id="SIDPFFM"/>
<dbReference type="PhylomeDB" id="O16544"/>
<dbReference type="Reactome" id="R-CEL-2514859">
    <property type="pathway name" value="Inactivation, recovery and regulation of the phototransduction cascade"/>
</dbReference>
<dbReference type="PRO" id="PR:O16544"/>
<dbReference type="Proteomes" id="UP000001940">
    <property type="component" value="Chromosome II"/>
</dbReference>
<dbReference type="GO" id="GO:0005886">
    <property type="term" value="C:plasma membrane"/>
    <property type="evidence" value="ECO:0000318"/>
    <property type="project" value="GO_Central"/>
</dbReference>
<dbReference type="GO" id="GO:0005524">
    <property type="term" value="F:ATP binding"/>
    <property type="evidence" value="ECO:0007669"/>
    <property type="project" value="InterPro"/>
</dbReference>
<dbReference type="GO" id="GO:0005525">
    <property type="term" value="F:GTP binding"/>
    <property type="evidence" value="ECO:0007669"/>
    <property type="project" value="UniProtKB-KW"/>
</dbReference>
<dbReference type="GO" id="GO:0004383">
    <property type="term" value="F:guanylate cyclase activity"/>
    <property type="evidence" value="ECO:0000318"/>
    <property type="project" value="GO_Central"/>
</dbReference>
<dbReference type="GO" id="GO:0001653">
    <property type="term" value="F:peptide receptor activity"/>
    <property type="evidence" value="ECO:0000318"/>
    <property type="project" value="GO_Central"/>
</dbReference>
<dbReference type="GO" id="GO:0004672">
    <property type="term" value="F:protein kinase activity"/>
    <property type="evidence" value="ECO:0007669"/>
    <property type="project" value="InterPro"/>
</dbReference>
<dbReference type="GO" id="GO:0006182">
    <property type="term" value="P:cGMP biosynthetic process"/>
    <property type="evidence" value="ECO:0000318"/>
    <property type="project" value="GO_Central"/>
</dbReference>
<dbReference type="GO" id="GO:0035556">
    <property type="term" value="P:intracellular signal transduction"/>
    <property type="evidence" value="ECO:0007669"/>
    <property type="project" value="InterPro"/>
</dbReference>
<dbReference type="GO" id="GO:0007168">
    <property type="term" value="P:receptor guanylyl cyclase signaling pathway"/>
    <property type="evidence" value="ECO:0000318"/>
    <property type="project" value="GO_Central"/>
</dbReference>
<dbReference type="CDD" id="cd07302">
    <property type="entry name" value="CHD"/>
    <property type="match status" value="1"/>
</dbReference>
<dbReference type="CDD" id="cd06352">
    <property type="entry name" value="PBP1_NPR_GC-like"/>
    <property type="match status" value="1"/>
</dbReference>
<dbReference type="FunFam" id="3.30.70.1230:FF:000023">
    <property type="entry name" value="Guanylate cyclase"/>
    <property type="match status" value="1"/>
</dbReference>
<dbReference type="FunFam" id="3.40.50.2300:FF:000447">
    <property type="entry name" value="Receptor-type guanylate cyclase gcy-19"/>
    <property type="match status" value="1"/>
</dbReference>
<dbReference type="Gene3D" id="3.40.50.2300">
    <property type="match status" value="3"/>
</dbReference>
<dbReference type="Gene3D" id="6.10.250.780">
    <property type="match status" value="1"/>
</dbReference>
<dbReference type="Gene3D" id="3.30.70.1230">
    <property type="entry name" value="Nucleotide cyclase"/>
    <property type="match status" value="1"/>
</dbReference>
<dbReference type="Gene3D" id="1.10.510.10">
    <property type="entry name" value="Transferase(Phosphotransferase) domain 1"/>
    <property type="match status" value="1"/>
</dbReference>
<dbReference type="InterPro" id="IPR001054">
    <property type="entry name" value="A/G_cyclase"/>
</dbReference>
<dbReference type="InterPro" id="IPR018297">
    <property type="entry name" value="A/G_cyclase_CS"/>
</dbReference>
<dbReference type="InterPro" id="IPR001828">
    <property type="entry name" value="ANF_lig-bd_rcpt"/>
</dbReference>
<dbReference type="InterPro" id="IPR050401">
    <property type="entry name" value="Cyclic_nucleotide_synthase"/>
</dbReference>
<dbReference type="InterPro" id="IPR011009">
    <property type="entry name" value="Kinase-like_dom_sf"/>
</dbReference>
<dbReference type="InterPro" id="IPR029787">
    <property type="entry name" value="Nucleotide_cyclase"/>
</dbReference>
<dbReference type="InterPro" id="IPR028082">
    <property type="entry name" value="Peripla_BP_I"/>
</dbReference>
<dbReference type="InterPro" id="IPR000719">
    <property type="entry name" value="Prot_kinase_dom"/>
</dbReference>
<dbReference type="InterPro" id="IPR001245">
    <property type="entry name" value="Ser-Thr/Tyr_kinase_cat_dom"/>
</dbReference>
<dbReference type="PANTHER" id="PTHR11920">
    <property type="entry name" value="GUANYLYL CYCLASE"/>
    <property type="match status" value="1"/>
</dbReference>
<dbReference type="PANTHER" id="PTHR11920:SF71">
    <property type="entry name" value="RECEPTOR-TYPE GUANYLATE CYCLASE GCY-19"/>
    <property type="match status" value="1"/>
</dbReference>
<dbReference type="Pfam" id="PF01094">
    <property type="entry name" value="ANF_receptor"/>
    <property type="match status" value="1"/>
</dbReference>
<dbReference type="Pfam" id="PF00211">
    <property type="entry name" value="Guanylate_cyc"/>
    <property type="match status" value="1"/>
</dbReference>
<dbReference type="Pfam" id="PF07714">
    <property type="entry name" value="PK_Tyr_Ser-Thr"/>
    <property type="match status" value="1"/>
</dbReference>
<dbReference type="SMART" id="SM00044">
    <property type="entry name" value="CYCc"/>
    <property type="match status" value="1"/>
</dbReference>
<dbReference type="SUPFAM" id="SSF55073">
    <property type="entry name" value="Nucleotide cyclase"/>
    <property type="match status" value="1"/>
</dbReference>
<dbReference type="SUPFAM" id="SSF53822">
    <property type="entry name" value="Periplasmic binding protein-like I"/>
    <property type="match status" value="1"/>
</dbReference>
<dbReference type="SUPFAM" id="SSF56112">
    <property type="entry name" value="Protein kinase-like (PK-like)"/>
    <property type="match status" value="1"/>
</dbReference>
<dbReference type="PROSITE" id="PS00452">
    <property type="entry name" value="GUANYLATE_CYCLASE_1"/>
    <property type="match status" value="1"/>
</dbReference>
<dbReference type="PROSITE" id="PS50125">
    <property type="entry name" value="GUANYLATE_CYCLASE_2"/>
    <property type="match status" value="1"/>
</dbReference>
<dbReference type="PROSITE" id="PS50011">
    <property type="entry name" value="PROTEIN_KINASE_DOM"/>
    <property type="match status" value="1"/>
</dbReference>